<organism>
    <name type="scientific">Francisella philomiragia subsp. philomiragia (strain ATCC 25017 / CCUG 19701 / FSC 153 / O#319-036)</name>
    <dbReference type="NCBI Taxonomy" id="484022"/>
    <lineage>
        <taxon>Bacteria</taxon>
        <taxon>Pseudomonadati</taxon>
        <taxon>Pseudomonadota</taxon>
        <taxon>Gammaproteobacteria</taxon>
        <taxon>Thiotrichales</taxon>
        <taxon>Francisellaceae</taxon>
        <taxon>Francisella</taxon>
    </lineage>
</organism>
<reference key="1">
    <citation type="submission" date="2007-12" db="EMBL/GenBank/DDBJ databases">
        <title>Complete sequence of chromosome of Francisella philomiragia subsp. philomiragia ATCC 25017.</title>
        <authorList>
            <consortium name="US DOE Joint Genome Institute"/>
            <person name="Copeland A."/>
            <person name="Lucas S."/>
            <person name="Lapidus A."/>
            <person name="Barry K."/>
            <person name="Detter J.C."/>
            <person name="Glavina del Rio T."/>
            <person name="Hammon N."/>
            <person name="Israni S."/>
            <person name="Dalin E."/>
            <person name="Tice H."/>
            <person name="Pitluck S."/>
            <person name="Chain P."/>
            <person name="Malfatti S."/>
            <person name="Shin M."/>
            <person name="Vergez L."/>
            <person name="Schmutz J."/>
            <person name="Larimer F."/>
            <person name="Land M."/>
            <person name="Hauser L."/>
            <person name="Richardson P."/>
        </authorList>
    </citation>
    <scope>NUCLEOTIDE SEQUENCE [LARGE SCALE GENOMIC DNA]</scope>
    <source>
        <strain>ATCC 25017 / CCUG 19701 / FSC 153 / O#319-036</strain>
    </source>
</reference>
<name>LPXB_FRAP2</name>
<comment type="function">
    <text evidence="1">Condensation of UDP-2,3-diacylglucosamine and 2,3-diacylglucosamine-1-phosphate to form lipid A disaccharide, a precursor of lipid A, a phosphorylated glycolipid that anchors the lipopolysaccharide to the outer membrane of the cell.</text>
</comment>
<comment type="catalytic activity">
    <reaction evidence="1">
        <text>a lipid X + a UDP-2-N,3-O-bis[(3R)-3-hydroxyacyl]-alpha-D-glucosamine = a lipid A disaccharide + UDP + H(+)</text>
        <dbReference type="Rhea" id="RHEA:67828"/>
        <dbReference type="ChEBI" id="CHEBI:15378"/>
        <dbReference type="ChEBI" id="CHEBI:58223"/>
        <dbReference type="ChEBI" id="CHEBI:137748"/>
        <dbReference type="ChEBI" id="CHEBI:176338"/>
        <dbReference type="ChEBI" id="CHEBI:176343"/>
        <dbReference type="EC" id="2.4.1.182"/>
    </reaction>
</comment>
<comment type="pathway">
    <text evidence="1">Bacterial outer membrane biogenesis; LPS lipid A biosynthesis.</text>
</comment>
<comment type="similarity">
    <text evidence="1">Belongs to the LpxB family.</text>
</comment>
<evidence type="ECO:0000255" key="1">
    <source>
        <dbReference type="HAMAP-Rule" id="MF_00392"/>
    </source>
</evidence>
<keyword id="KW-0328">Glycosyltransferase</keyword>
<keyword id="KW-0441">Lipid A biosynthesis</keyword>
<keyword id="KW-0444">Lipid biosynthesis</keyword>
<keyword id="KW-0443">Lipid metabolism</keyword>
<keyword id="KW-0808">Transferase</keyword>
<feature type="chain" id="PRO_1000080279" description="Lipid-A-disaccharide synthase">
    <location>
        <begin position="1"/>
        <end position="380"/>
    </location>
</feature>
<gene>
    <name evidence="1" type="primary">lpxB</name>
    <name type="ordered locus">Fphi_1201</name>
</gene>
<sequence>MRIGIVAGELSGDQLGATLVEALKKKYPNAEIEGIGGPKMEAQGFKSLYPMDALSLIGFLEILSKGLSILNIRRKIIKYFKHNKPDIFIGIDAPDFNLTVEKKLRASGIKTIHYVSPKIWVWREYRIKKIRKATDKILAILPFEVEYYKNRHNFEAIYVGHPLAKNISLEIDRSKYKKRLGLENVELPILSVLPGSRTTEVTRLLPLFLDAIEKLQESGYKFKAIMPLAKPSLKPIFDQYNSQIRSLGIEVLETNSHDVLKASDLSLLASGTATLEAMLCKLPMVVGYKLSKLSAFIGRILIRGHSYWAFPNILHKSEIIKELIQEDCTVDNLFYELKRLFDDKQRNNYIVQEFKKIHEHMVVDTEEKIIEVLDSIIEKS</sequence>
<proteinExistence type="inferred from homology"/>
<dbReference type="EC" id="2.4.1.182" evidence="1"/>
<dbReference type="EMBL" id="CP000937">
    <property type="protein sequence ID" value="ABZ87426.1"/>
    <property type="molecule type" value="Genomic_DNA"/>
</dbReference>
<dbReference type="SMR" id="B0TXG8"/>
<dbReference type="CAZy" id="GT19">
    <property type="family name" value="Glycosyltransferase Family 19"/>
</dbReference>
<dbReference type="KEGG" id="fph:Fphi_1201"/>
<dbReference type="eggNOG" id="COG0763">
    <property type="taxonomic scope" value="Bacteria"/>
</dbReference>
<dbReference type="HOGENOM" id="CLU_036577_3_0_6"/>
<dbReference type="UniPathway" id="UPA00973"/>
<dbReference type="GO" id="GO:0016020">
    <property type="term" value="C:membrane"/>
    <property type="evidence" value="ECO:0007669"/>
    <property type="project" value="GOC"/>
</dbReference>
<dbReference type="GO" id="GO:0008915">
    <property type="term" value="F:lipid-A-disaccharide synthase activity"/>
    <property type="evidence" value="ECO:0007669"/>
    <property type="project" value="UniProtKB-UniRule"/>
</dbReference>
<dbReference type="GO" id="GO:0005543">
    <property type="term" value="F:phospholipid binding"/>
    <property type="evidence" value="ECO:0007669"/>
    <property type="project" value="TreeGrafter"/>
</dbReference>
<dbReference type="GO" id="GO:0009245">
    <property type="term" value="P:lipid A biosynthetic process"/>
    <property type="evidence" value="ECO:0007669"/>
    <property type="project" value="UniProtKB-UniRule"/>
</dbReference>
<dbReference type="CDD" id="cd01635">
    <property type="entry name" value="Glycosyltransferase_GTB-type"/>
    <property type="match status" value="1"/>
</dbReference>
<dbReference type="Gene3D" id="3.40.50.2000">
    <property type="entry name" value="Glycogen Phosphorylase B"/>
    <property type="match status" value="2"/>
</dbReference>
<dbReference type="HAMAP" id="MF_00392">
    <property type="entry name" value="LpxB"/>
    <property type="match status" value="1"/>
</dbReference>
<dbReference type="InterPro" id="IPR003835">
    <property type="entry name" value="Glyco_trans_19"/>
</dbReference>
<dbReference type="NCBIfam" id="TIGR00215">
    <property type="entry name" value="lpxB"/>
    <property type="match status" value="1"/>
</dbReference>
<dbReference type="PANTHER" id="PTHR30372">
    <property type="entry name" value="LIPID-A-DISACCHARIDE SYNTHASE"/>
    <property type="match status" value="1"/>
</dbReference>
<dbReference type="PANTHER" id="PTHR30372:SF4">
    <property type="entry name" value="LIPID-A-DISACCHARIDE SYNTHASE, MITOCHONDRIAL-RELATED"/>
    <property type="match status" value="1"/>
</dbReference>
<dbReference type="Pfam" id="PF02684">
    <property type="entry name" value="LpxB"/>
    <property type="match status" value="1"/>
</dbReference>
<dbReference type="SUPFAM" id="SSF53756">
    <property type="entry name" value="UDP-Glycosyltransferase/glycogen phosphorylase"/>
    <property type="match status" value="1"/>
</dbReference>
<accession>B0TXG8</accession>
<protein>
    <recommendedName>
        <fullName evidence="1">Lipid-A-disaccharide synthase</fullName>
        <ecNumber evidence="1">2.4.1.182</ecNumber>
    </recommendedName>
</protein>